<comment type="function">
    <text evidence="3 4 5">ALDHs play a major role in the detoxification of alcohol-derived acetaldehyde (Probable). They are involved in the metabolism of corticosteroids, biogenic amines, neurotransmitters, and lipid peroxidation (Probable). Oxidizes medium and long chain aldehydes into non-toxic fatty acids (PubMed:2831537). Preferentially oxidizes aromatic aldehyde substrates (PubMed:2831537). Comprises about 50 percent of corneal epithelial soluble proteins (By similarity). May play a role in preventing corneal damage caused by ultraviolet light (By similarity).</text>
</comment>
<comment type="catalytic activity">
    <reaction evidence="4">
        <text>an aldehyde + NAD(+) + H2O = a carboxylate + NADH + 2 H(+)</text>
        <dbReference type="Rhea" id="RHEA:16185"/>
        <dbReference type="ChEBI" id="CHEBI:15377"/>
        <dbReference type="ChEBI" id="CHEBI:15378"/>
        <dbReference type="ChEBI" id="CHEBI:17478"/>
        <dbReference type="ChEBI" id="CHEBI:29067"/>
        <dbReference type="ChEBI" id="CHEBI:57540"/>
        <dbReference type="ChEBI" id="CHEBI:57945"/>
        <dbReference type="EC" id="1.2.1.5"/>
    </reaction>
</comment>
<comment type="catalytic activity">
    <reaction evidence="3">
        <text>octanal + NAD(+) + H2O = octanoate + NADH + 2 H(+)</text>
        <dbReference type="Rhea" id="RHEA:44100"/>
        <dbReference type="ChEBI" id="CHEBI:15377"/>
        <dbReference type="ChEBI" id="CHEBI:15378"/>
        <dbReference type="ChEBI" id="CHEBI:17935"/>
        <dbReference type="ChEBI" id="CHEBI:25646"/>
        <dbReference type="ChEBI" id="CHEBI:57540"/>
        <dbReference type="ChEBI" id="CHEBI:57945"/>
    </reaction>
</comment>
<comment type="subunit">
    <text>Homodimer.</text>
</comment>
<comment type="subcellular location">
    <subcellularLocation>
        <location evidence="3">Cytoplasm</location>
    </subcellularLocation>
</comment>
<comment type="induction">
    <text>This protein can be induced by a number of chemical carcinogens during rat hepatocarcinogenesis.</text>
</comment>
<comment type="similarity">
    <text evidence="5">Belongs to the aldehyde dehydrogenase family.</text>
</comment>
<evidence type="ECO:0000250" key="1"/>
<evidence type="ECO:0000250" key="2">
    <source>
        <dbReference type="UniProtKB" id="P30838"/>
    </source>
</evidence>
<evidence type="ECO:0000250" key="3">
    <source>
        <dbReference type="UniProtKB" id="P47739"/>
    </source>
</evidence>
<evidence type="ECO:0000269" key="4">
    <source>
    </source>
</evidence>
<evidence type="ECO:0000305" key="5"/>
<evidence type="ECO:0007829" key="6">
    <source>
        <dbReference type="PDB" id="1AD3"/>
    </source>
</evidence>
<reference key="1">
    <citation type="journal article" date="1988" name="Proc. Natl. Acad. Sci. U.S.A.">
        <title>Cloning and complete nucleotide sequence of a full-length cDNA encoding a catalytically functional tumor-associated aldehyde dehydrogenase.</title>
        <authorList>
            <person name="Jones D.E."/>
            <person name="Brennan M.D."/>
            <person name="Hempel J."/>
            <person name="Lindahl R."/>
        </authorList>
    </citation>
    <scope>NUCLEOTIDE SEQUENCE [MRNA]</scope>
    <scope>FUNCTION</scope>
    <scope>CATALYTIC ACTIVITY</scope>
</reference>
<reference key="2">
    <citation type="journal article" date="2004" name="Genome Res.">
        <title>The status, quality, and expansion of the NIH full-length cDNA project: the Mammalian Gene Collection (MGC).</title>
        <authorList>
            <consortium name="The MGC Project Team"/>
        </authorList>
    </citation>
    <scope>NUCLEOTIDE SEQUENCE [LARGE SCALE MRNA]</scope>
    <source>
        <tissue>Lung</tissue>
    </source>
</reference>
<reference key="3">
    <citation type="journal article" date="1989" name="Biochemistry">
        <title>Inducible (class 3) aldehyde dehydrogenase from rat hepatocellular carcinoma and 2,3,7,8-tetrachlorodibenzo-p-dioxin-treated liver: distant relationship to the class 1 and 2 enzymes from mammalian liver cytosol/mitochondria.</title>
        <authorList>
            <person name="Hempel J."/>
            <person name="Harper K."/>
            <person name="Lindahl R."/>
        </authorList>
    </citation>
    <scope>PARTIAL PROTEIN SEQUENCE</scope>
</reference>
<reference key="4">
    <citation type="journal article" date="1993" name="J. Biol. Chem.">
        <title>Organization and characterization of the rat class 3 aldehyde dehydrogenase gene.</title>
        <authorList>
            <person name="Asman D.C."/>
            <person name="Takimoto K."/>
            <person name="Pitot H.C."/>
            <person name="Dunn T.J."/>
            <person name="Lindahl R."/>
        </authorList>
    </citation>
    <scope>GENE STRUCTURE</scope>
</reference>
<reference key="5">
    <citation type="journal article" date="1990" name="Proteins">
        <title>Preliminary crystallographic analysis of class 3 rat liver aldehyde dehydrogenase.</title>
        <authorList>
            <person name="Rose J.P."/>
            <person name="Hempel J."/>
            <person name="Kuo I."/>
            <person name="Lindahl R."/>
            <person name="Wang B.-C."/>
        </authorList>
    </citation>
    <scope>X-RAY CRYSTALLOGRAPHY (2.5 ANGSTROMS)</scope>
</reference>
<reference key="6">
    <citation type="journal article" date="1997" name="Nat. Struct. Biol.">
        <title>The first structure of an aldehyde dehydrogenase reveals novel interactions between NAD and the Rossmann fold.</title>
        <authorList>
            <person name="Liu Z.-J."/>
            <person name="Sun Y.J."/>
            <person name="Rose J.P."/>
            <person name="Chung Y.-J."/>
            <person name="Hsiao C.D."/>
            <person name="Chang W.-R."/>
            <person name="Kuo I."/>
            <person name="Perozich J."/>
            <person name="Lindahl R."/>
            <person name="Hempel J."/>
            <person name="Wang B.-C."/>
        </authorList>
    </citation>
    <scope>X-RAY CRYSTALLOGRAPHY (2.6 ANGSTROMS)</scope>
</reference>
<feature type="initiator methionine" description="Removed" evidence="2">
    <location>
        <position position="1"/>
    </location>
</feature>
<feature type="chain" id="PRO_0000056472" description="Aldehyde dehydrogenase, dimeric NADP-preferring">
    <location>
        <begin position="2"/>
        <end position="453"/>
    </location>
</feature>
<feature type="active site" evidence="1">
    <location>
        <position position="210"/>
    </location>
</feature>
<feature type="active site" evidence="1">
    <location>
        <position position="244"/>
    </location>
</feature>
<feature type="binding site" evidence="1">
    <location>
        <begin position="188"/>
        <end position="193"/>
    </location>
    <ligand>
        <name>NAD(+)</name>
        <dbReference type="ChEBI" id="CHEBI:57540"/>
    </ligand>
</feature>
<feature type="modified residue" description="N-acetylserine" evidence="2">
    <location>
        <position position="2"/>
    </location>
</feature>
<feature type="modified residue" description="N6-acetyllysine" evidence="2">
    <location>
        <position position="178"/>
    </location>
</feature>
<feature type="modified residue" description="N6-acetyllysine" evidence="2">
    <location>
        <position position="194"/>
    </location>
</feature>
<feature type="helix" evidence="6">
    <location>
        <begin position="4"/>
        <end position="16"/>
    </location>
</feature>
<feature type="helix" evidence="6">
    <location>
        <begin position="19"/>
        <end position="21"/>
    </location>
</feature>
<feature type="helix" evidence="6">
    <location>
        <begin position="23"/>
        <end position="52"/>
    </location>
</feature>
<feature type="helix" evidence="6">
    <location>
        <begin position="56"/>
        <end position="62"/>
    </location>
</feature>
<feature type="helix" evidence="6">
    <location>
        <begin position="64"/>
        <end position="82"/>
    </location>
</feature>
<feature type="turn" evidence="6">
    <location>
        <begin position="92"/>
        <end position="95"/>
    </location>
</feature>
<feature type="strand" evidence="6">
    <location>
        <begin position="96"/>
        <end position="104"/>
    </location>
</feature>
<feature type="strand" evidence="6">
    <location>
        <begin position="106"/>
        <end position="111"/>
    </location>
</feature>
<feature type="strand" evidence="6">
    <location>
        <begin position="114"/>
        <end position="116"/>
    </location>
</feature>
<feature type="helix" evidence="6">
    <location>
        <begin position="119"/>
        <end position="130"/>
    </location>
</feature>
<feature type="strand" evidence="6">
    <location>
        <begin position="134"/>
        <end position="138"/>
    </location>
</feature>
<feature type="helix" evidence="6">
    <location>
        <begin position="144"/>
        <end position="157"/>
    </location>
</feature>
<feature type="turn" evidence="6">
    <location>
        <begin position="160"/>
        <end position="162"/>
    </location>
</feature>
<feature type="strand" evidence="6">
    <location>
        <begin position="163"/>
        <end position="165"/>
    </location>
</feature>
<feature type="helix" evidence="6">
    <location>
        <begin position="170"/>
        <end position="176"/>
    </location>
</feature>
<feature type="strand" evidence="6">
    <location>
        <begin position="182"/>
        <end position="188"/>
    </location>
</feature>
<feature type="helix" evidence="6">
    <location>
        <begin position="190"/>
        <end position="201"/>
    </location>
</feature>
<feature type="turn" evidence="6">
    <location>
        <begin position="202"/>
        <end position="204"/>
    </location>
</feature>
<feature type="strand" evidence="6">
    <location>
        <begin position="207"/>
        <end position="210"/>
    </location>
</feature>
<feature type="strand" evidence="6">
    <location>
        <begin position="216"/>
        <end position="219"/>
    </location>
</feature>
<feature type="strand" evidence="6">
    <location>
        <begin position="221"/>
        <end position="223"/>
    </location>
</feature>
<feature type="helix" evidence="6">
    <location>
        <begin position="225"/>
        <end position="237"/>
    </location>
</feature>
<feature type="turn" evidence="6">
    <location>
        <begin position="238"/>
        <end position="241"/>
    </location>
</feature>
<feature type="strand" evidence="6">
    <location>
        <begin position="249"/>
        <end position="252"/>
    </location>
</feature>
<feature type="helix" evidence="6">
    <location>
        <begin position="254"/>
        <end position="256"/>
    </location>
</feature>
<feature type="helix" evidence="6">
    <location>
        <begin position="257"/>
        <end position="272"/>
    </location>
</feature>
<feature type="helix" evidence="6">
    <location>
        <begin position="276"/>
        <end position="278"/>
    </location>
</feature>
<feature type="helix" evidence="6">
    <location>
        <begin position="288"/>
        <end position="296"/>
    </location>
</feature>
<feature type="turn" evidence="6">
    <location>
        <begin position="297"/>
        <end position="300"/>
    </location>
</feature>
<feature type="strand" evidence="6">
    <location>
        <begin position="303"/>
        <end position="305"/>
    </location>
</feature>
<feature type="turn" evidence="6">
    <location>
        <begin position="311"/>
        <end position="314"/>
    </location>
</feature>
<feature type="strand" evidence="6">
    <location>
        <begin position="319"/>
        <end position="321"/>
    </location>
</feature>
<feature type="helix" evidence="6">
    <location>
        <begin position="329"/>
        <end position="331"/>
    </location>
</feature>
<feature type="strand" evidence="6">
    <location>
        <begin position="337"/>
        <end position="340"/>
    </location>
</feature>
<feature type="strand" evidence="6">
    <location>
        <begin position="342"/>
        <end position="344"/>
    </location>
</feature>
<feature type="helix" evidence="6">
    <location>
        <begin position="348"/>
        <end position="356"/>
    </location>
</feature>
<feature type="strand" evidence="6">
    <location>
        <begin position="362"/>
        <end position="367"/>
    </location>
</feature>
<feature type="helix" evidence="6">
    <location>
        <begin position="371"/>
        <end position="378"/>
    </location>
</feature>
<feature type="strand" evidence="6">
    <location>
        <begin position="384"/>
        <end position="392"/>
    </location>
</feature>
<feature type="helix" evidence="6">
    <location>
        <begin position="393"/>
        <end position="396"/>
    </location>
</feature>
<feature type="helix" evidence="6">
    <location>
        <begin position="406"/>
        <end position="408"/>
    </location>
</feature>
<feature type="helix" evidence="6">
    <location>
        <begin position="416"/>
        <end position="421"/>
    </location>
</feature>
<feature type="strand" evidence="6">
    <location>
        <begin position="423"/>
        <end position="430"/>
    </location>
</feature>
<feature type="helix" evidence="6">
    <location>
        <begin position="440"/>
        <end position="442"/>
    </location>
</feature>
<feature type="strand" evidence="6">
    <location>
        <begin position="443"/>
        <end position="445"/>
    </location>
</feature>
<keyword id="KW-0002">3D-structure</keyword>
<keyword id="KW-0007">Acetylation</keyword>
<keyword id="KW-0963">Cytoplasm</keyword>
<keyword id="KW-0903">Direct protein sequencing</keyword>
<keyword id="KW-0443">Lipid metabolism</keyword>
<keyword id="KW-0520">NAD</keyword>
<keyword id="KW-0521">NADP</keyword>
<keyword id="KW-0560">Oxidoreductase</keyword>
<keyword id="KW-1185">Reference proteome</keyword>
<sequence>MSSISDTVKRAREAFNSGKTRSLQFRIQQLEALQRMINENLKSISGALASDLGKNEWTSYYEEVAHVLEELDTTIKELPDWAEDEPVAKTRQTQQDDLYIHSEPLGVVLVIGAWNYPFNLTIQPMVGAVAAGNAVILKPSEVSGHMADLLATLIPQYMDQNLYLVVKGGVPETTELLKERFDHIMYTGSTAVGKIVMAAAAKHLTPVTLELGGKSPCYVDKDCDLDVACRRIAWGKFMNSGQTCVAPDYILCDPSIQNQIVEKLKKSLKDFYGEDAKQSRDYGRIINDRHFQRVKGLIDNQKVAHGGTWDQSSRYIAPTILVDVDPQSPVMQEEIFGPVMPIVCVRSLEEAIQFINQREKPLALYVFSNNEKVIKKMIAETSSGGVTANDVIVHITVPTLPFGGVGNSGMGAYHGKKSFETFSHRRSCLVKSLLNEEAHKARYPPSPAKMPRH</sequence>
<name>AL3A1_RAT</name>
<organism>
    <name type="scientific">Rattus norvegicus</name>
    <name type="common">Rat</name>
    <dbReference type="NCBI Taxonomy" id="10116"/>
    <lineage>
        <taxon>Eukaryota</taxon>
        <taxon>Metazoa</taxon>
        <taxon>Chordata</taxon>
        <taxon>Craniata</taxon>
        <taxon>Vertebrata</taxon>
        <taxon>Euteleostomi</taxon>
        <taxon>Mammalia</taxon>
        <taxon>Eutheria</taxon>
        <taxon>Euarchontoglires</taxon>
        <taxon>Glires</taxon>
        <taxon>Rodentia</taxon>
        <taxon>Myomorpha</taxon>
        <taxon>Muroidea</taxon>
        <taxon>Muridae</taxon>
        <taxon>Murinae</taxon>
        <taxon>Rattus</taxon>
    </lineage>
</organism>
<protein>
    <recommendedName>
        <fullName>Aldehyde dehydrogenase, dimeric NADP-preferring</fullName>
        <ecNumber evidence="4">1.2.1.5</ecNumber>
    </recommendedName>
    <alternativeName>
        <fullName>Aldehyde dehydrogenase family 3 member A1</fullName>
    </alternativeName>
    <alternativeName>
        <fullName>HTC-ALDH</fullName>
    </alternativeName>
    <alternativeName>
        <fullName>Tumor-associated aldehyde dehydrogenase</fullName>
    </alternativeName>
</protein>
<dbReference type="EC" id="1.2.1.5" evidence="4"/>
<dbReference type="EMBL" id="J03637">
    <property type="protein sequence ID" value="AAA40713.1"/>
    <property type="molecule type" value="mRNA"/>
</dbReference>
<dbReference type="EMBL" id="BC070924">
    <property type="protein sequence ID" value="AAH70924.1"/>
    <property type="molecule type" value="mRNA"/>
</dbReference>
<dbReference type="PIR" id="A30149">
    <property type="entry name" value="A30149"/>
</dbReference>
<dbReference type="RefSeq" id="NP_114178.1">
    <property type="nucleotide sequence ID" value="NM_031972.2"/>
</dbReference>
<dbReference type="PDB" id="1AD3">
    <property type="method" value="X-ray"/>
    <property type="resolution" value="2.60 A"/>
    <property type="chains" value="A/B=3-453"/>
</dbReference>
<dbReference type="PDBsum" id="1AD3"/>
<dbReference type="SMR" id="P11883"/>
<dbReference type="FunCoup" id="P11883">
    <property type="interactions" value="204"/>
</dbReference>
<dbReference type="IntAct" id="P11883">
    <property type="interactions" value="1"/>
</dbReference>
<dbReference type="STRING" id="10116.ENSRNOP00000003182"/>
<dbReference type="PhosphoSitePlus" id="P11883"/>
<dbReference type="SwissPalm" id="P11883"/>
<dbReference type="PaxDb" id="10116-ENSRNOP00000003182"/>
<dbReference type="GeneID" id="25375"/>
<dbReference type="KEGG" id="rno:25375"/>
<dbReference type="UCSC" id="RGD:2088">
    <property type="organism name" value="rat"/>
</dbReference>
<dbReference type="AGR" id="RGD:2088"/>
<dbReference type="CTD" id="218"/>
<dbReference type="RGD" id="2088">
    <property type="gene designation" value="Aldh3a1"/>
</dbReference>
<dbReference type="VEuPathDB" id="HostDB:ENSRNOG00000002331"/>
<dbReference type="eggNOG" id="KOG2456">
    <property type="taxonomic scope" value="Eukaryota"/>
</dbReference>
<dbReference type="HOGENOM" id="CLU_005391_3_0_1"/>
<dbReference type="InParanoid" id="P11883"/>
<dbReference type="OrthoDB" id="14905at9989"/>
<dbReference type="PhylomeDB" id="P11883"/>
<dbReference type="TreeFam" id="TF314264"/>
<dbReference type="Reactome" id="R-RNO-211945">
    <property type="pathway name" value="Phase I - Functionalization of compounds"/>
</dbReference>
<dbReference type="SABIO-RK" id="P11883"/>
<dbReference type="EvolutionaryTrace" id="P11883"/>
<dbReference type="PRO" id="PR:P11883"/>
<dbReference type="Proteomes" id="UP000002494">
    <property type="component" value="Chromosome 10"/>
</dbReference>
<dbReference type="Bgee" id="ENSRNOG00000002331">
    <property type="expression patterns" value="Expressed in esophagus and 14 other cell types or tissues"/>
</dbReference>
<dbReference type="GO" id="GO:0005737">
    <property type="term" value="C:cytoplasm"/>
    <property type="evidence" value="ECO:0000266"/>
    <property type="project" value="RGD"/>
</dbReference>
<dbReference type="GO" id="GO:0005829">
    <property type="term" value="C:cytosol"/>
    <property type="evidence" value="ECO:0000314"/>
    <property type="project" value="UniProtKB"/>
</dbReference>
<dbReference type="GO" id="GO:0016020">
    <property type="term" value="C:membrane"/>
    <property type="evidence" value="ECO:0000266"/>
    <property type="project" value="RGD"/>
</dbReference>
<dbReference type="GO" id="GO:0004028">
    <property type="term" value="F:3-chloroallyl aldehyde dehydrogenase activity"/>
    <property type="evidence" value="ECO:0000314"/>
    <property type="project" value="RGD"/>
</dbReference>
<dbReference type="GO" id="GO:0008106">
    <property type="term" value="F:alcohol dehydrogenase (NADP+) activity"/>
    <property type="evidence" value="ECO:0000250"/>
    <property type="project" value="UniProtKB"/>
</dbReference>
<dbReference type="GO" id="GO:0004029">
    <property type="term" value="F:aldehyde dehydrogenase (NAD+) activity"/>
    <property type="evidence" value="ECO:0000250"/>
    <property type="project" value="UniProtKB"/>
</dbReference>
<dbReference type="GO" id="GO:0018479">
    <property type="term" value="F:benzaldehyde dehydrogenase (NAD+) activity"/>
    <property type="evidence" value="ECO:0000266"/>
    <property type="project" value="RGD"/>
</dbReference>
<dbReference type="GO" id="GO:0016620">
    <property type="term" value="F:oxidoreductase activity, acting on the aldehyde or oxo group of donors, NAD or NADP as acceptor"/>
    <property type="evidence" value="ECO:0000266"/>
    <property type="project" value="RGD"/>
</dbReference>
<dbReference type="GO" id="GO:0006081">
    <property type="term" value="P:aldehyde metabolic process"/>
    <property type="evidence" value="ECO:0000250"/>
    <property type="project" value="UniProtKB"/>
</dbReference>
<dbReference type="GO" id="GO:0006629">
    <property type="term" value="P:lipid metabolic process"/>
    <property type="evidence" value="ECO:0007669"/>
    <property type="project" value="UniProtKB-KW"/>
</dbReference>
<dbReference type="GO" id="GO:0008284">
    <property type="term" value="P:positive regulation of cell population proliferation"/>
    <property type="evidence" value="ECO:0000315"/>
    <property type="project" value="RGD"/>
</dbReference>
<dbReference type="GO" id="GO:0051591">
    <property type="term" value="P:response to cAMP"/>
    <property type="evidence" value="ECO:0000314"/>
    <property type="project" value="RGD"/>
</dbReference>
<dbReference type="GO" id="GO:0051384">
    <property type="term" value="P:response to glucocorticoid"/>
    <property type="evidence" value="ECO:0000314"/>
    <property type="project" value="RGD"/>
</dbReference>
<dbReference type="GO" id="GO:0001666">
    <property type="term" value="P:response to hypoxia"/>
    <property type="evidence" value="ECO:0000314"/>
    <property type="project" value="RGD"/>
</dbReference>
<dbReference type="GO" id="GO:0007584">
    <property type="term" value="P:response to nutrient"/>
    <property type="evidence" value="ECO:0000270"/>
    <property type="project" value="RGD"/>
</dbReference>
<dbReference type="GO" id="GO:0009410">
    <property type="term" value="P:response to xenobiotic stimulus"/>
    <property type="evidence" value="ECO:0000314"/>
    <property type="project" value="RGD"/>
</dbReference>
<dbReference type="CDD" id="cd07132">
    <property type="entry name" value="ALDH_F3AB"/>
    <property type="match status" value="1"/>
</dbReference>
<dbReference type="FunFam" id="3.40.309.10:FF:000003">
    <property type="entry name" value="Aldehyde dehydrogenase"/>
    <property type="match status" value="1"/>
</dbReference>
<dbReference type="FunFam" id="3.40.605.10:FF:000004">
    <property type="entry name" value="Aldehyde dehydrogenase"/>
    <property type="match status" value="1"/>
</dbReference>
<dbReference type="FunFam" id="3.40.605.10:FF:000027">
    <property type="entry name" value="Aldehyde dehydrogenase, dimeric NADP-preferring"/>
    <property type="match status" value="1"/>
</dbReference>
<dbReference type="Gene3D" id="3.40.605.10">
    <property type="entry name" value="Aldehyde Dehydrogenase, Chain A, domain 1"/>
    <property type="match status" value="1"/>
</dbReference>
<dbReference type="Gene3D" id="3.40.309.10">
    <property type="entry name" value="Aldehyde Dehydrogenase, Chain A, domain 2"/>
    <property type="match status" value="1"/>
</dbReference>
<dbReference type="InterPro" id="IPR016161">
    <property type="entry name" value="Ald_DH/histidinol_DH"/>
</dbReference>
<dbReference type="InterPro" id="IPR016163">
    <property type="entry name" value="Ald_DH_C"/>
</dbReference>
<dbReference type="InterPro" id="IPR016160">
    <property type="entry name" value="Ald_DH_CS_CYS"/>
</dbReference>
<dbReference type="InterPro" id="IPR029510">
    <property type="entry name" value="Ald_DH_CS_GLU"/>
</dbReference>
<dbReference type="InterPro" id="IPR016162">
    <property type="entry name" value="Ald_DH_N"/>
</dbReference>
<dbReference type="InterPro" id="IPR015590">
    <property type="entry name" value="Aldehyde_DH_dom"/>
</dbReference>
<dbReference type="InterPro" id="IPR012394">
    <property type="entry name" value="Aldehyde_DH_NAD(P)"/>
</dbReference>
<dbReference type="PANTHER" id="PTHR43570">
    <property type="entry name" value="ALDEHYDE DEHYDROGENASE"/>
    <property type="match status" value="1"/>
</dbReference>
<dbReference type="PANTHER" id="PTHR43570:SF15">
    <property type="entry name" value="ALDEHYDE DEHYDROGENASE, DIMERIC NADP-PREFERRING"/>
    <property type="match status" value="1"/>
</dbReference>
<dbReference type="Pfam" id="PF00171">
    <property type="entry name" value="Aldedh"/>
    <property type="match status" value="1"/>
</dbReference>
<dbReference type="PIRSF" id="PIRSF036492">
    <property type="entry name" value="ALDH"/>
    <property type="match status" value="1"/>
</dbReference>
<dbReference type="SUPFAM" id="SSF53720">
    <property type="entry name" value="ALDH-like"/>
    <property type="match status" value="1"/>
</dbReference>
<dbReference type="PROSITE" id="PS00070">
    <property type="entry name" value="ALDEHYDE_DEHYDR_CYS"/>
    <property type="match status" value="1"/>
</dbReference>
<dbReference type="PROSITE" id="PS00687">
    <property type="entry name" value="ALDEHYDE_DEHYDR_GLU"/>
    <property type="match status" value="1"/>
</dbReference>
<accession>P11883</accession>
<proteinExistence type="evidence at protein level"/>
<gene>
    <name type="primary">Aldh3a1</name>
    <name type="synonym">Aldd</name>
    <name type="synonym">Aldh3</name>
</gene>